<name>CYB_ORYAF</name>
<proteinExistence type="inferred from homology"/>
<sequence length="379" mass="42749">MTNIRKTHPLIKIINHSFIDLPTPSNISAWWNFGSLLGICLIIQIVTGLFLAMHYTSDTSTAFSSVTHICRDVNYGWLIRYLHANGASMFFICLFIHIGRGIYYGSYLYSETWNIGIILLFTTMATAFMGYVLPWGQMSFWGATVITNLLSAIPYIGTNLVEWIWGGFSVDKATLTRFFAFHFILPFIIAALAMVHLLFLHETGSNNPLGLISDSDKIPFHPYYTIKDLLGLCLLILLLLLLVLFSPDLLGDPSNYTPANPLSTPPHIKPEWYFLFAYAILRSIPNKLGGVLALVASILILAIFPLLHTAKQRSMTFRPLSQCLFWILVADLITLTWIGGQPVEHPFIIIGQLASILYFIIILILMPITSMIENKMLKW</sequence>
<feature type="chain" id="PRO_0000254838" description="Cytochrome b">
    <location>
        <begin position="1"/>
        <end position="379"/>
    </location>
</feature>
<feature type="transmembrane region" description="Helical" evidence="2">
    <location>
        <begin position="33"/>
        <end position="53"/>
    </location>
</feature>
<feature type="transmembrane region" description="Helical" evidence="2">
    <location>
        <begin position="77"/>
        <end position="98"/>
    </location>
</feature>
<feature type="transmembrane region" description="Helical" evidence="2">
    <location>
        <begin position="113"/>
        <end position="133"/>
    </location>
</feature>
<feature type="transmembrane region" description="Helical" evidence="2">
    <location>
        <begin position="178"/>
        <end position="198"/>
    </location>
</feature>
<feature type="transmembrane region" description="Helical" evidence="2">
    <location>
        <begin position="226"/>
        <end position="246"/>
    </location>
</feature>
<feature type="transmembrane region" description="Helical" evidence="2">
    <location>
        <begin position="288"/>
        <end position="308"/>
    </location>
</feature>
<feature type="transmembrane region" description="Helical" evidence="2">
    <location>
        <begin position="320"/>
        <end position="340"/>
    </location>
</feature>
<feature type="transmembrane region" description="Helical" evidence="2">
    <location>
        <begin position="347"/>
        <end position="367"/>
    </location>
</feature>
<feature type="binding site" description="axial binding residue" evidence="2">
    <location>
        <position position="83"/>
    </location>
    <ligand>
        <name>heme b</name>
        <dbReference type="ChEBI" id="CHEBI:60344"/>
        <label>b562</label>
    </ligand>
    <ligandPart>
        <name>Fe</name>
        <dbReference type="ChEBI" id="CHEBI:18248"/>
    </ligandPart>
</feature>
<feature type="binding site" description="axial binding residue" evidence="2">
    <location>
        <position position="97"/>
    </location>
    <ligand>
        <name>heme b</name>
        <dbReference type="ChEBI" id="CHEBI:60344"/>
        <label>b566</label>
    </ligand>
    <ligandPart>
        <name>Fe</name>
        <dbReference type="ChEBI" id="CHEBI:18248"/>
    </ligandPart>
</feature>
<feature type="binding site" description="axial binding residue" evidence="2">
    <location>
        <position position="182"/>
    </location>
    <ligand>
        <name>heme b</name>
        <dbReference type="ChEBI" id="CHEBI:60344"/>
        <label>b562</label>
    </ligand>
    <ligandPart>
        <name>Fe</name>
        <dbReference type="ChEBI" id="CHEBI:18248"/>
    </ligandPart>
</feature>
<feature type="binding site" description="axial binding residue" evidence="2">
    <location>
        <position position="196"/>
    </location>
    <ligand>
        <name>heme b</name>
        <dbReference type="ChEBI" id="CHEBI:60344"/>
        <label>b566</label>
    </ligand>
    <ligandPart>
        <name>Fe</name>
        <dbReference type="ChEBI" id="CHEBI:18248"/>
    </ligandPart>
</feature>
<feature type="binding site" evidence="2">
    <location>
        <position position="201"/>
    </location>
    <ligand>
        <name>a ubiquinone</name>
        <dbReference type="ChEBI" id="CHEBI:16389"/>
    </ligand>
</feature>
<protein>
    <recommendedName>
        <fullName>Cytochrome b</fullName>
    </recommendedName>
    <alternativeName>
        <fullName>Complex III subunit 3</fullName>
    </alternativeName>
    <alternativeName>
        <fullName>Complex III subunit III</fullName>
    </alternativeName>
    <alternativeName>
        <fullName>Cytochrome b-c1 complex subunit 3</fullName>
    </alternativeName>
    <alternativeName>
        <fullName>Ubiquinol-cytochrome-c reductase complex cytochrome b subunit</fullName>
    </alternativeName>
</protein>
<accession>Q9THD6</accession>
<reference key="1">
    <citation type="journal article" date="1999" name="Proc. R. Soc. B">
        <title>The mitochondrial DNA molecule of the aardvark, Orycteropus afer, and the position of the Tubulidentata in the eutherian tree.</title>
        <authorList>
            <person name="Arnason U."/>
            <person name="Gullberg A."/>
            <person name="Janke A."/>
        </authorList>
    </citation>
    <scope>NUCLEOTIDE SEQUENCE [GENOMIC DNA]</scope>
</reference>
<dbReference type="EMBL" id="Y18475">
    <property type="protein sequence ID" value="CAB41633.1"/>
    <property type="molecule type" value="Genomic_DNA"/>
</dbReference>
<dbReference type="PIR" id="T11349">
    <property type="entry name" value="T11349"/>
</dbReference>
<dbReference type="RefSeq" id="NP_008587.1">
    <property type="nucleotide sequence ID" value="NC_002078.1"/>
</dbReference>
<dbReference type="SMR" id="Q9THD6"/>
<dbReference type="GeneID" id="808409"/>
<dbReference type="CTD" id="4519"/>
<dbReference type="GO" id="GO:0005743">
    <property type="term" value="C:mitochondrial inner membrane"/>
    <property type="evidence" value="ECO:0007669"/>
    <property type="project" value="UniProtKB-SubCell"/>
</dbReference>
<dbReference type="GO" id="GO:0045275">
    <property type="term" value="C:respiratory chain complex III"/>
    <property type="evidence" value="ECO:0007669"/>
    <property type="project" value="InterPro"/>
</dbReference>
<dbReference type="GO" id="GO:0046872">
    <property type="term" value="F:metal ion binding"/>
    <property type="evidence" value="ECO:0007669"/>
    <property type="project" value="UniProtKB-KW"/>
</dbReference>
<dbReference type="GO" id="GO:0008121">
    <property type="term" value="F:ubiquinol-cytochrome-c reductase activity"/>
    <property type="evidence" value="ECO:0007669"/>
    <property type="project" value="InterPro"/>
</dbReference>
<dbReference type="GO" id="GO:0006122">
    <property type="term" value="P:mitochondrial electron transport, ubiquinol to cytochrome c"/>
    <property type="evidence" value="ECO:0007669"/>
    <property type="project" value="TreeGrafter"/>
</dbReference>
<dbReference type="CDD" id="cd00290">
    <property type="entry name" value="cytochrome_b_C"/>
    <property type="match status" value="1"/>
</dbReference>
<dbReference type="CDD" id="cd00284">
    <property type="entry name" value="Cytochrome_b_N"/>
    <property type="match status" value="1"/>
</dbReference>
<dbReference type="FunFam" id="1.20.810.10:FF:000002">
    <property type="entry name" value="Cytochrome b"/>
    <property type="match status" value="1"/>
</dbReference>
<dbReference type="Gene3D" id="1.20.810.10">
    <property type="entry name" value="Cytochrome Bc1 Complex, Chain C"/>
    <property type="match status" value="1"/>
</dbReference>
<dbReference type="InterPro" id="IPR005798">
    <property type="entry name" value="Cyt_b/b6_C"/>
</dbReference>
<dbReference type="InterPro" id="IPR036150">
    <property type="entry name" value="Cyt_b/b6_C_sf"/>
</dbReference>
<dbReference type="InterPro" id="IPR005797">
    <property type="entry name" value="Cyt_b/b6_N"/>
</dbReference>
<dbReference type="InterPro" id="IPR027387">
    <property type="entry name" value="Cytb/b6-like_sf"/>
</dbReference>
<dbReference type="InterPro" id="IPR030689">
    <property type="entry name" value="Cytochrome_b"/>
</dbReference>
<dbReference type="InterPro" id="IPR048260">
    <property type="entry name" value="Cytochrome_b_C_euk/bac"/>
</dbReference>
<dbReference type="InterPro" id="IPR048259">
    <property type="entry name" value="Cytochrome_b_N_euk/bac"/>
</dbReference>
<dbReference type="InterPro" id="IPR016174">
    <property type="entry name" value="Di-haem_cyt_TM"/>
</dbReference>
<dbReference type="PANTHER" id="PTHR19271">
    <property type="entry name" value="CYTOCHROME B"/>
    <property type="match status" value="1"/>
</dbReference>
<dbReference type="PANTHER" id="PTHR19271:SF16">
    <property type="entry name" value="CYTOCHROME B"/>
    <property type="match status" value="1"/>
</dbReference>
<dbReference type="Pfam" id="PF00032">
    <property type="entry name" value="Cytochrom_B_C"/>
    <property type="match status" value="1"/>
</dbReference>
<dbReference type="Pfam" id="PF00033">
    <property type="entry name" value="Cytochrome_B"/>
    <property type="match status" value="1"/>
</dbReference>
<dbReference type="PIRSF" id="PIRSF038885">
    <property type="entry name" value="COB"/>
    <property type="match status" value="1"/>
</dbReference>
<dbReference type="SUPFAM" id="SSF81648">
    <property type="entry name" value="a domain/subunit of cytochrome bc1 complex (Ubiquinol-cytochrome c reductase)"/>
    <property type="match status" value="1"/>
</dbReference>
<dbReference type="SUPFAM" id="SSF81342">
    <property type="entry name" value="Transmembrane di-heme cytochromes"/>
    <property type="match status" value="1"/>
</dbReference>
<dbReference type="PROSITE" id="PS51003">
    <property type="entry name" value="CYTB_CTER"/>
    <property type="match status" value="1"/>
</dbReference>
<dbReference type="PROSITE" id="PS51002">
    <property type="entry name" value="CYTB_NTER"/>
    <property type="match status" value="1"/>
</dbReference>
<comment type="function">
    <text evidence="2">Component of the ubiquinol-cytochrome c reductase complex (complex III or cytochrome b-c1 complex) that is part of the mitochondrial respiratory chain. The b-c1 complex mediates electron transfer from ubiquinol to cytochrome c. Contributes to the generation of a proton gradient across the mitochondrial membrane that is then used for ATP synthesis.</text>
</comment>
<comment type="cofactor">
    <cofactor evidence="2">
        <name>heme b</name>
        <dbReference type="ChEBI" id="CHEBI:60344"/>
    </cofactor>
    <text evidence="2">Binds 2 heme b groups non-covalently.</text>
</comment>
<comment type="subunit">
    <text evidence="2">The cytochrome bc1 complex contains 11 subunits: 3 respiratory subunits (MT-CYB, CYC1 and UQCRFS1), 2 core proteins (UQCRC1 and UQCRC2) and 6 low-molecular weight proteins (UQCRH/QCR6, UQCRB/QCR7, UQCRQ/QCR8, UQCR10/QCR9, UQCR11/QCR10 and a cleavage product of UQCRFS1). This cytochrome bc1 complex then forms a dimer.</text>
</comment>
<comment type="subcellular location">
    <subcellularLocation>
        <location evidence="2">Mitochondrion inner membrane</location>
        <topology evidence="2">Multi-pass membrane protein</topology>
    </subcellularLocation>
</comment>
<comment type="miscellaneous">
    <text evidence="1">Heme 1 (or BL or b562) is low-potential and absorbs at about 562 nm, and heme 2 (or BH or b566) is high-potential and absorbs at about 566 nm.</text>
</comment>
<comment type="similarity">
    <text evidence="3 4">Belongs to the cytochrome b family.</text>
</comment>
<comment type="caution">
    <text evidence="2">The full-length protein contains only eight transmembrane helices, not nine as predicted by bioinformatics tools.</text>
</comment>
<keyword id="KW-0249">Electron transport</keyword>
<keyword id="KW-0349">Heme</keyword>
<keyword id="KW-0408">Iron</keyword>
<keyword id="KW-0472">Membrane</keyword>
<keyword id="KW-0479">Metal-binding</keyword>
<keyword id="KW-0496">Mitochondrion</keyword>
<keyword id="KW-0999">Mitochondrion inner membrane</keyword>
<keyword id="KW-0679">Respiratory chain</keyword>
<keyword id="KW-0812">Transmembrane</keyword>
<keyword id="KW-1133">Transmembrane helix</keyword>
<keyword id="KW-0813">Transport</keyword>
<keyword id="KW-0830">Ubiquinone</keyword>
<geneLocation type="mitochondrion"/>
<evidence type="ECO:0000250" key="1"/>
<evidence type="ECO:0000250" key="2">
    <source>
        <dbReference type="UniProtKB" id="P00157"/>
    </source>
</evidence>
<evidence type="ECO:0000255" key="3">
    <source>
        <dbReference type="PROSITE-ProRule" id="PRU00967"/>
    </source>
</evidence>
<evidence type="ECO:0000255" key="4">
    <source>
        <dbReference type="PROSITE-ProRule" id="PRU00968"/>
    </source>
</evidence>
<gene>
    <name type="primary">MT-CYB</name>
    <name type="synonym">COB</name>
    <name type="synonym">CYTB</name>
    <name type="synonym">MTCYB</name>
</gene>
<organism>
    <name type="scientific">Orycteropus afer</name>
    <name type="common">Aardvark</name>
    <dbReference type="NCBI Taxonomy" id="9818"/>
    <lineage>
        <taxon>Eukaryota</taxon>
        <taxon>Metazoa</taxon>
        <taxon>Chordata</taxon>
        <taxon>Craniata</taxon>
        <taxon>Vertebrata</taxon>
        <taxon>Euteleostomi</taxon>
        <taxon>Mammalia</taxon>
        <taxon>Eutheria</taxon>
        <taxon>Afrotheria</taxon>
        <taxon>Tubulidentata</taxon>
        <taxon>Orycteropodidae</taxon>
        <taxon>Orycteropus</taxon>
    </lineage>
</organism>